<proteinExistence type="inferred from homology"/>
<protein>
    <recommendedName>
        <fullName evidence="2">Exoribonuclease 2</fullName>
        <ecNumber evidence="2">3.1.13.1</ecNumber>
    </recommendedName>
    <alternativeName>
        <fullName evidence="2">Exoribonuclease II</fullName>
        <shortName evidence="2">RNase II</shortName>
        <shortName evidence="2">Ribonuclease II</shortName>
    </alternativeName>
</protein>
<feature type="chain" id="PRO_1000063907" description="Exoribonuclease 2">
    <location>
        <begin position="1"/>
        <end position="644"/>
    </location>
</feature>
<feature type="domain" description="RNB" evidence="1">
    <location>
        <begin position="189"/>
        <end position="516"/>
    </location>
</feature>
<feature type="domain" description="S1 motif" evidence="2">
    <location>
        <begin position="561"/>
        <end position="643"/>
    </location>
</feature>
<organism>
    <name type="scientific">Yersinia pestis (strain Pestoides F)</name>
    <dbReference type="NCBI Taxonomy" id="386656"/>
    <lineage>
        <taxon>Bacteria</taxon>
        <taxon>Pseudomonadati</taxon>
        <taxon>Pseudomonadota</taxon>
        <taxon>Gammaproteobacteria</taxon>
        <taxon>Enterobacterales</taxon>
        <taxon>Yersiniaceae</taxon>
        <taxon>Yersinia</taxon>
    </lineage>
</organism>
<gene>
    <name evidence="2" type="primary">rnb</name>
    <name type="ordered locus">YPDSF_0899</name>
</gene>
<evidence type="ECO:0000255" key="1"/>
<evidence type="ECO:0000255" key="2">
    <source>
        <dbReference type="HAMAP-Rule" id="MF_01036"/>
    </source>
</evidence>
<name>RNB_YERPP</name>
<comment type="function">
    <text evidence="2">Involved in mRNA degradation. Hydrolyzes single-stranded polyribonucleotides processively in the 3' to 5' direction.</text>
</comment>
<comment type="catalytic activity">
    <reaction evidence="2">
        <text>Exonucleolytic cleavage in the 3'- to 5'-direction to yield nucleoside 5'-phosphates.</text>
        <dbReference type="EC" id="3.1.13.1"/>
    </reaction>
</comment>
<comment type="subcellular location">
    <subcellularLocation>
        <location evidence="2">Cytoplasm</location>
    </subcellularLocation>
</comment>
<comment type="similarity">
    <text evidence="2">Belongs to the RNR ribonuclease family. RNase II subfamily.</text>
</comment>
<dbReference type="EC" id="3.1.13.1" evidence="2"/>
<dbReference type="EMBL" id="CP000668">
    <property type="protein sequence ID" value="ABP39299.1"/>
    <property type="molecule type" value="Genomic_DNA"/>
</dbReference>
<dbReference type="RefSeq" id="WP_002210605.1">
    <property type="nucleotide sequence ID" value="NZ_CP009715.1"/>
</dbReference>
<dbReference type="SMR" id="A4TJ37"/>
<dbReference type="KEGG" id="ypp:YPDSF_0899"/>
<dbReference type="PATRIC" id="fig|386656.14.peg.2954"/>
<dbReference type="GO" id="GO:0005829">
    <property type="term" value="C:cytosol"/>
    <property type="evidence" value="ECO:0007669"/>
    <property type="project" value="TreeGrafter"/>
</dbReference>
<dbReference type="GO" id="GO:0008859">
    <property type="term" value="F:exoribonuclease II activity"/>
    <property type="evidence" value="ECO:0007669"/>
    <property type="project" value="UniProtKB-UniRule"/>
</dbReference>
<dbReference type="GO" id="GO:0003723">
    <property type="term" value="F:RNA binding"/>
    <property type="evidence" value="ECO:0007669"/>
    <property type="project" value="UniProtKB-KW"/>
</dbReference>
<dbReference type="GO" id="GO:0006402">
    <property type="term" value="P:mRNA catabolic process"/>
    <property type="evidence" value="ECO:0007669"/>
    <property type="project" value="UniProtKB-UniRule"/>
</dbReference>
<dbReference type="FunFam" id="2.40.50.140:FF:000079">
    <property type="entry name" value="Exoribonuclease 2"/>
    <property type="match status" value="1"/>
</dbReference>
<dbReference type="Gene3D" id="2.40.50.640">
    <property type="match status" value="1"/>
</dbReference>
<dbReference type="Gene3D" id="2.40.50.140">
    <property type="entry name" value="Nucleic acid-binding proteins"/>
    <property type="match status" value="2"/>
</dbReference>
<dbReference type="HAMAP" id="MF_01036">
    <property type="entry name" value="RNase_II"/>
    <property type="match status" value="1"/>
</dbReference>
<dbReference type="InterPro" id="IPR011129">
    <property type="entry name" value="CSD"/>
</dbReference>
<dbReference type="InterPro" id="IPR012340">
    <property type="entry name" value="NA-bd_OB-fold"/>
</dbReference>
<dbReference type="InterPro" id="IPR013223">
    <property type="entry name" value="RNase_B_OB_dom"/>
</dbReference>
<dbReference type="InterPro" id="IPR011804">
    <property type="entry name" value="RNase_II"/>
</dbReference>
<dbReference type="InterPro" id="IPR001900">
    <property type="entry name" value="RNase_II/R"/>
</dbReference>
<dbReference type="InterPro" id="IPR022966">
    <property type="entry name" value="RNase_II/R_CS"/>
</dbReference>
<dbReference type="InterPro" id="IPR004476">
    <property type="entry name" value="RNase_II/RNase_R"/>
</dbReference>
<dbReference type="InterPro" id="IPR050180">
    <property type="entry name" value="RNR_Ribonuclease"/>
</dbReference>
<dbReference type="InterPro" id="IPR003029">
    <property type="entry name" value="S1_domain"/>
</dbReference>
<dbReference type="NCBIfam" id="TIGR00358">
    <property type="entry name" value="3_prime_RNase"/>
    <property type="match status" value="1"/>
</dbReference>
<dbReference type="NCBIfam" id="NF003455">
    <property type="entry name" value="PRK05054.1"/>
    <property type="match status" value="1"/>
</dbReference>
<dbReference type="NCBIfam" id="TIGR02062">
    <property type="entry name" value="RNase_B"/>
    <property type="match status" value="1"/>
</dbReference>
<dbReference type="PANTHER" id="PTHR23355:SF37">
    <property type="entry name" value="EXORIBONUCLEASE 2"/>
    <property type="match status" value="1"/>
</dbReference>
<dbReference type="PANTHER" id="PTHR23355">
    <property type="entry name" value="RIBONUCLEASE"/>
    <property type="match status" value="1"/>
</dbReference>
<dbReference type="Pfam" id="PF08206">
    <property type="entry name" value="OB_RNB"/>
    <property type="match status" value="1"/>
</dbReference>
<dbReference type="Pfam" id="PF00773">
    <property type="entry name" value="RNB"/>
    <property type="match status" value="1"/>
</dbReference>
<dbReference type="Pfam" id="PF00575">
    <property type="entry name" value="S1"/>
    <property type="match status" value="1"/>
</dbReference>
<dbReference type="SMART" id="SM00357">
    <property type="entry name" value="CSP"/>
    <property type="match status" value="1"/>
</dbReference>
<dbReference type="SMART" id="SM00955">
    <property type="entry name" value="RNB"/>
    <property type="match status" value="1"/>
</dbReference>
<dbReference type="SUPFAM" id="SSF50249">
    <property type="entry name" value="Nucleic acid-binding proteins"/>
    <property type="match status" value="4"/>
</dbReference>
<dbReference type="PROSITE" id="PS01175">
    <property type="entry name" value="RIBONUCLEASE_II"/>
    <property type="match status" value="1"/>
</dbReference>
<reference key="1">
    <citation type="submission" date="2007-02" db="EMBL/GenBank/DDBJ databases">
        <title>Complete sequence of chromosome of Yersinia pestis Pestoides F.</title>
        <authorList>
            <consortium name="US DOE Joint Genome Institute"/>
            <person name="Copeland A."/>
            <person name="Lucas S."/>
            <person name="Lapidus A."/>
            <person name="Barry K."/>
            <person name="Detter J.C."/>
            <person name="Glavina del Rio T."/>
            <person name="Hammon N."/>
            <person name="Israni S."/>
            <person name="Dalin E."/>
            <person name="Tice H."/>
            <person name="Pitluck S."/>
            <person name="Di Bartolo G."/>
            <person name="Chain P."/>
            <person name="Malfatti S."/>
            <person name="Shin M."/>
            <person name="Vergez L."/>
            <person name="Schmutz J."/>
            <person name="Larimer F."/>
            <person name="Land M."/>
            <person name="Hauser L."/>
            <person name="Worsham P."/>
            <person name="Chu M."/>
            <person name="Bearden S."/>
            <person name="Garcia E."/>
            <person name="Richardson P."/>
        </authorList>
    </citation>
    <scope>NUCLEOTIDE SEQUENCE [LARGE SCALE GENOMIC DNA]</scope>
    <source>
        <strain>Pestoides F</strain>
    </source>
</reference>
<keyword id="KW-0963">Cytoplasm</keyword>
<keyword id="KW-0269">Exonuclease</keyword>
<keyword id="KW-0378">Hydrolase</keyword>
<keyword id="KW-0540">Nuclease</keyword>
<keyword id="KW-0694">RNA-binding</keyword>
<accession>A4TJ37</accession>
<sequence length="644" mass="72875">MFQDNPLLAQLKQQLHTQTPRVEGVVKGTEKGFGFLEVDGQKSYFIPPPQMKKVMHGDRIIATLHTDKDREIAEPETLVEPFLSRFVGRVQRKDDRLSIVPDHPLLRDAIQCRPVRELTHSFQNGDWAVAEMCRHPLKGDRAFQADLTAFITNGEDHFVPWWVTLARHNLEREAPAMVESALNDAELEREDLTALNFVTIDSASTEDMDDALFVQDNGDGSWLLTIAIADPTAYVVENSELDLTARKRAFTNYLPGFNIPMLPRDLSDNLCSLRPNERRPVLVCRVTITEEGTLSNDIRFSAAWVESKAKLVYDDVSDWLEGNNRWQPQDTAIAEQITLLKRICDARSNWRQQHALVFKDRPDYRFLLGEKGEVLDIIVEHRRIANRIVEECMIAANVCAALALREHLGFGIYNVHTGFDPALVEQAASVLKANGVGADPQALLTLPGFCELRRHLDALPTQFLDSRIRRFQTFAEISTVPGPHFGLGLEAYATWTSPIRKYGDMVNHRLLKAMITGQQAEKPQEEITVQLAERRRLNRMAERDVGDWLYARYLQPQAGTDTRFTAEIIDITRGGLRVRLLDNGAVAFIPAPFIHAVRDEVVCSQETGTVQIKGETVYSQSDKIEVRIAEVRMETRNVIARPVA</sequence>